<gene>
    <name evidence="1" type="primary">rnfA</name>
    <name type="ordered locus">PSHAa1105</name>
</gene>
<protein>
    <recommendedName>
        <fullName evidence="1">Ion-translocating oxidoreductase complex subunit A</fullName>
        <ecNumber evidence="1">7.-.-.-</ecNumber>
    </recommendedName>
    <alternativeName>
        <fullName evidence="1">Rnf electron transport complex subunit A</fullName>
    </alternativeName>
</protein>
<organism>
    <name type="scientific">Pseudoalteromonas translucida (strain TAC 125)</name>
    <dbReference type="NCBI Taxonomy" id="326442"/>
    <lineage>
        <taxon>Bacteria</taxon>
        <taxon>Pseudomonadati</taxon>
        <taxon>Pseudomonadota</taxon>
        <taxon>Gammaproteobacteria</taxon>
        <taxon>Alteromonadales</taxon>
        <taxon>Pseudoalteromonadaceae</taxon>
        <taxon>Pseudoalteromonas</taxon>
    </lineage>
</organism>
<accession>Q3IKD8</accession>
<comment type="function">
    <text evidence="1">Part of a membrane-bound complex that couples electron transfer with translocation of ions across the membrane.</text>
</comment>
<comment type="subunit">
    <text evidence="1">The complex is composed of six subunits: RnfA, RnfB, RnfC, RnfD, RnfE and RnfG.</text>
</comment>
<comment type="subcellular location">
    <subcellularLocation>
        <location evidence="1">Cell inner membrane</location>
        <topology evidence="1">Multi-pass membrane protein</topology>
    </subcellularLocation>
</comment>
<comment type="similarity">
    <text evidence="1">Belongs to the NqrDE/RnfAE family.</text>
</comment>
<keyword id="KW-0997">Cell inner membrane</keyword>
<keyword id="KW-1003">Cell membrane</keyword>
<keyword id="KW-0249">Electron transport</keyword>
<keyword id="KW-0472">Membrane</keyword>
<keyword id="KW-1185">Reference proteome</keyword>
<keyword id="KW-1278">Translocase</keyword>
<keyword id="KW-0812">Transmembrane</keyword>
<keyword id="KW-1133">Transmembrane helix</keyword>
<keyword id="KW-0813">Transport</keyword>
<feature type="chain" id="PRO_1000013540" description="Ion-translocating oxidoreductase complex subunit A">
    <location>
        <begin position="1"/>
        <end position="193"/>
    </location>
</feature>
<feature type="transmembrane region" description="Helical" evidence="1">
    <location>
        <begin position="5"/>
        <end position="25"/>
    </location>
</feature>
<feature type="transmembrane region" description="Helical" evidence="1">
    <location>
        <begin position="39"/>
        <end position="59"/>
    </location>
</feature>
<feature type="transmembrane region" description="Helical" evidence="1">
    <location>
        <begin position="63"/>
        <end position="83"/>
    </location>
</feature>
<feature type="transmembrane region" description="Helical" evidence="1">
    <location>
        <begin position="102"/>
        <end position="122"/>
    </location>
</feature>
<feature type="transmembrane region" description="Helical" evidence="1">
    <location>
        <begin position="134"/>
        <end position="154"/>
    </location>
</feature>
<feature type="transmembrane region" description="Helical" evidence="1">
    <location>
        <begin position="171"/>
        <end position="191"/>
    </location>
</feature>
<name>RNFA_PSET1</name>
<dbReference type="EC" id="7.-.-.-" evidence="1"/>
<dbReference type="EMBL" id="CR954246">
    <property type="protein sequence ID" value="CAI86180.1"/>
    <property type="molecule type" value="Genomic_DNA"/>
</dbReference>
<dbReference type="SMR" id="Q3IKD8"/>
<dbReference type="STRING" id="326442.PSHAa1105"/>
<dbReference type="KEGG" id="pha:PSHAa1105"/>
<dbReference type="eggNOG" id="COG4657">
    <property type="taxonomic scope" value="Bacteria"/>
</dbReference>
<dbReference type="HOGENOM" id="CLU_095255_1_0_6"/>
<dbReference type="BioCyc" id="PHAL326442:PSHA_RS05490-MONOMER"/>
<dbReference type="Proteomes" id="UP000006843">
    <property type="component" value="Chromosome I"/>
</dbReference>
<dbReference type="GO" id="GO:0005886">
    <property type="term" value="C:plasma membrane"/>
    <property type="evidence" value="ECO:0007669"/>
    <property type="project" value="UniProtKB-SubCell"/>
</dbReference>
<dbReference type="GO" id="GO:0022900">
    <property type="term" value="P:electron transport chain"/>
    <property type="evidence" value="ECO:0007669"/>
    <property type="project" value="UniProtKB-UniRule"/>
</dbReference>
<dbReference type="HAMAP" id="MF_00459">
    <property type="entry name" value="RsxA_RnfA"/>
    <property type="match status" value="1"/>
</dbReference>
<dbReference type="InterPro" id="IPR011293">
    <property type="entry name" value="Ion_transpt_RnfA/RsxA"/>
</dbReference>
<dbReference type="InterPro" id="IPR003667">
    <property type="entry name" value="NqrDE/RnfAE"/>
</dbReference>
<dbReference type="InterPro" id="IPR050133">
    <property type="entry name" value="NqrDE/RnfAE_oxidrdctase"/>
</dbReference>
<dbReference type="NCBIfam" id="NF003481">
    <property type="entry name" value="PRK05151.1"/>
    <property type="match status" value="1"/>
</dbReference>
<dbReference type="NCBIfam" id="TIGR01943">
    <property type="entry name" value="rnfA"/>
    <property type="match status" value="1"/>
</dbReference>
<dbReference type="PANTHER" id="PTHR30335">
    <property type="entry name" value="INTEGRAL MEMBRANE PROTEIN OF SOXR-REDUCING COMPLEX"/>
    <property type="match status" value="1"/>
</dbReference>
<dbReference type="PANTHER" id="PTHR30335:SF0">
    <property type="entry name" value="ION-TRANSLOCATING OXIDOREDUCTASE COMPLEX SUBUNIT A"/>
    <property type="match status" value="1"/>
</dbReference>
<dbReference type="Pfam" id="PF02508">
    <property type="entry name" value="Rnf-Nqr"/>
    <property type="match status" value="1"/>
</dbReference>
<dbReference type="PIRSF" id="PIRSF006102">
    <property type="entry name" value="NQR_DE"/>
    <property type="match status" value="1"/>
</dbReference>
<reference key="1">
    <citation type="journal article" date="2005" name="Genome Res.">
        <title>Coping with cold: the genome of the versatile marine Antarctica bacterium Pseudoalteromonas haloplanktis TAC125.</title>
        <authorList>
            <person name="Medigue C."/>
            <person name="Krin E."/>
            <person name="Pascal G."/>
            <person name="Barbe V."/>
            <person name="Bernsel A."/>
            <person name="Bertin P.N."/>
            <person name="Cheung F."/>
            <person name="Cruveiller S."/>
            <person name="D'Amico S."/>
            <person name="Duilio A."/>
            <person name="Fang G."/>
            <person name="Feller G."/>
            <person name="Ho C."/>
            <person name="Mangenot S."/>
            <person name="Marino G."/>
            <person name="Nilsson J."/>
            <person name="Parrilli E."/>
            <person name="Rocha E.P.C."/>
            <person name="Rouy Z."/>
            <person name="Sekowska A."/>
            <person name="Tutino M.L."/>
            <person name="Vallenet D."/>
            <person name="von Heijne G."/>
            <person name="Danchin A."/>
        </authorList>
    </citation>
    <scope>NUCLEOTIDE SEQUENCE [LARGE SCALE GENOMIC DNA]</scope>
    <source>
        <strain>TAC 125</strain>
    </source>
</reference>
<evidence type="ECO:0000255" key="1">
    <source>
        <dbReference type="HAMAP-Rule" id="MF_00459"/>
    </source>
</evidence>
<proteinExistence type="inferred from homology"/>
<sequence>MTEYVLLLIGTVLVNNFVLVQFLGLCPFMGVSSKLDTAIGMSLATTFVLTLASVTSYLVNQYILIPLDITYLRTMSFILVIAVVVQFTEMVVRKTSPTLYRLLGIFLPLITTNCAVLGVALLNIKEDHSFLQSAVYGFGAAVGFSLVLVLFAALRERLAAADVPTPFKGASIALITAGLMSMAFMGFTGLVKF</sequence>